<keyword id="KW-0903">Direct protein sequencing</keyword>
<keyword id="KW-0349">Heme</keyword>
<keyword id="KW-0408">Iron</keyword>
<keyword id="KW-0479">Metal-binding</keyword>
<keyword id="KW-0561">Oxygen transport</keyword>
<keyword id="KW-0813">Transport</keyword>
<accession>P82316</accession>
<name>HBBC_HOPLI</name>
<protein>
    <recommendedName>
        <fullName>Hemoglobin cathodic subunit beta</fullName>
    </recommendedName>
    <alternativeName>
        <fullName>Hemoglobin cathodic beta chain</fullName>
        <shortName>Hb(Ca) beta chain</shortName>
    </alternativeName>
</protein>
<feature type="chain" id="PRO_0000052974" description="Hemoglobin cathodic subunit beta">
    <location>
        <begin position="1"/>
        <end position="146"/>
    </location>
</feature>
<feature type="domain" description="Globin" evidence="1">
    <location>
        <begin position="2"/>
        <end position="146"/>
    </location>
</feature>
<feature type="binding site" description="distal binding residue">
    <location>
        <position position="63"/>
    </location>
    <ligand>
        <name>heme b</name>
        <dbReference type="ChEBI" id="CHEBI:60344"/>
    </ligand>
    <ligandPart>
        <name>Fe</name>
        <dbReference type="ChEBI" id="CHEBI:18248"/>
    </ligandPart>
</feature>
<feature type="binding site" description="proximal binding residue">
    <location>
        <position position="92"/>
    </location>
    <ligand>
        <name>heme b</name>
        <dbReference type="ChEBI" id="CHEBI:60344"/>
    </ligand>
    <ligandPart>
        <name>Fe</name>
        <dbReference type="ChEBI" id="CHEBI:18248"/>
    </ligandPart>
</feature>
<proteinExistence type="evidence at protein level"/>
<comment type="function">
    <text>Involved in oxygen transport from gills to the various peripheral tissues.</text>
</comment>
<comment type="subunit">
    <text evidence="2">Heterotetramer of two alpha chains and two beta chains.</text>
</comment>
<comment type="tissue specificity">
    <text>Red blood cells.</text>
</comment>
<comment type="mass spectrometry" mass="15978.0" error="0.2" method="Electrospray" evidence="2"/>
<comment type="miscellaneous">
    <text>This fish has two hemoglobins: cathodic and anodic. The cathodic Hb and anodic Hb display small and large Bohr effects respectively. In addition, the cathodic Hb displays a reverse Bohr effect and appreciable phosphate effects.</text>
</comment>
<comment type="similarity">
    <text evidence="1">Belongs to the globin family.</text>
</comment>
<evidence type="ECO:0000255" key="1">
    <source>
        <dbReference type="PROSITE-ProRule" id="PRU00238"/>
    </source>
</evidence>
<evidence type="ECO:0000269" key="2">
    <source>
    </source>
</evidence>
<reference key="1">
    <citation type="journal article" date="2000" name="J. Biol. Chem.">
        <title>Isohemoglobin differentiation in the bimodal-breathing amazon catfish Hoplosternum littorale.</title>
        <authorList>
            <person name="Weber R.E."/>
            <person name="Fago A."/>
            <person name="Val A.L."/>
            <person name="Bang A."/>
            <person name="Van Hauwaert M.-L."/>
            <person name="Dewilde S."/>
            <person name="Zal F."/>
            <person name="Moens L."/>
        </authorList>
    </citation>
    <scope>PROTEIN SEQUENCE</scope>
    <scope>SUBUNIT</scope>
    <scope>MASS SPECTROMETRY</scope>
    <source>
        <tissue>Blood</tissue>
    </source>
</reference>
<sequence length="146" mass="15976">VHFSDAERDAIAAIWGKIHIDEIGPQSLARVLIVYPWTQRYFSKFGDMSSVAAISGNPKVAAHGKVVLGALEKGVKNLDNVKATYSNLSQLHCEKLNVDPDNFRALGDCITIVVASKFGNAFTPELQNAWHKFLSVVAAALSSRYF</sequence>
<dbReference type="SMR" id="P82316"/>
<dbReference type="GO" id="GO:0072562">
    <property type="term" value="C:blood microparticle"/>
    <property type="evidence" value="ECO:0007669"/>
    <property type="project" value="TreeGrafter"/>
</dbReference>
<dbReference type="GO" id="GO:0031838">
    <property type="term" value="C:haptoglobin-hemoglobin complex"/>
    <property type="evidence" value="ECO:0007669"/>
    <property type="project" value="TreeGrafter"/>
</dbReference>
<dbReference type="GO" id="GO:0005833">
    <property type="term" value="C:hemoglobin complex"/>
    <property type="evidence" value="ECO:0007669"/>
    <property type="project" value="InterPro"/>
</dbReference>
<dbReference type="GO" id="GO:0031720">
    <property type="term" value="F:haptoglobin binding"/>
    <property type="evidence" value="ECO:0007669"/>
    <property type="project" value="TreeGrafter"/>
</dbReference>
<dbReference type="GO" id="GO:0020037">
    <property type="term" value="F:heme binding"/>
    <property type="evidence" value="ECO:0007669"/>
    <property type="project" value="InterPro"/>
</dbReference>
<dbReference type="GO" id="GO:0046872">
    <property type="term" value="F:metal ion binding"/>
    <property type="evidence" value="ECO:0007669"/>
    <property type="project" value="UniProtKB-KW"/>
</dbReference>
<dbReference type="GO" id="GO:0043177">
    <property type="term" value="F:organic acid binding"/>
    <property type="evidence" value="ECO:0007669"/>
    <property type="project" value="TreeGrafter"/>
</dbReference>
<dbReference type="GO" id="GO:0019825">
    <property type="term" value="F:oxygen binding"/>
    <property type="evidence" value="ECO:0007669"/>
    <property type="project" value="InterPro"/>
</dbReference>
<dbReference type="GO" id="GO:0005344">
    <property type="term" value="F:oxygen carrier activity"/>
    <property type="evidence" value="ECO:0007669"/>
    <property type="project" value="UniProtKB-KW"/>
</dbReference>
<dbReference type="GO" id="GO:0004601">
    <property type="term" value="F:peroxidase activity"/>
    <property type="evidence" value="ECO:0007669"/>
    <property type="project" value="TreeGrafter"/>
</dbReference>
<dbReference type="GO" id="GO:0042744">
    <property type="term" value="P:hydrogen peroxide catabolic process"/>
    <property type="evidence" value="ECO:0007669"/>
    <property type="project" value="TreeGrafter"/>
</dbReference>
<dbReference type="CDD" id="cd08925">
    <property type="entry name" value="Hb-beta-like"/>
    <property type="match status" value="1"/>
</dbReference>
<dbReference type="FunFam" id="1.10.490.10:FF:000001">
    <property type="entry name" value="Hemoglobin subunit beta"/>
    <property type="match status" value="1"/>
</dbReference>
<dbReference type="Gene3D" id="1.10.490.10">
    <property type="entry name" value="Globins"/>
    <property type="match status" value="1"/>
</dbReference>
<dbReference type="InterPro" id="IPR000971">
    <property type="entry name" value="Globin"/>
</dbReference>
<dbReference type="InterPro" id="IPR009050">
    <property type="entry name" value="Globin-like_sf"/>
</dbReference>
<dbReference type="InterPro" id="IPR012292">
    <property type="entry name" value="Globin/Proto"/>
</dbReference>
<dbReference type="InterPro" id="IPR002337">
    <property type="entry name" value="Hemoglobin_b"/>
</dbReference>
<dbReference type="InterPro" id="IPR050056">
    <property type="entry name" value="Hemoglobin_oxygen_transport"/>
</dbReference>
<dbReference type="PANTHER" id="PTHR11442">
    <property type="entry name" value="HEMOGLOBIN FAMILY MEMBER"/>
    <property type="match status" value="1"/>
</dbReference>
<dbReference type="PANTHER" id="PTHR11442:SF101">
    <property type="entry name" value="HEMOGLOBIN, BETA ADULT 2"/>
    <property type="match status" value="1"/>
</dbReference>
<dbReference type="Pfam" id="PF00042">
    <property type="entry name" value="Globin"/>
    <property type="match status" value="1"/>
</dbReference>
<dbReference type="PRINTS" id="PR00814">
    <property type="entry name" value="BETAHAEM"/>
</dbReference>
<dbReference type="SUPFAM" id="SSF46458">
    <property type="entry name" value="Globin-like"/>
    <property type="match status" value="1"/>
</dbReference>
<dbReference type="PROSITE" id="PS01033">
    <property type="entry name" value="GLOBIN"/>
    <property type="match status" value="1"/>
</dbReference>
<organism>
    <name type="scientific">Hoplosternum littorale</name>
    <name type="common">Hassar</name>
    <dbReference type="NCBI Taxonomy" id="114109"/>
    <lineage>
        <taxon>Eukaryota</taxon>
        <taxon>Metazoa</taxon>
        <taxon>Chordata</taxon>
        <taxon>Craniata</taxon>
        <taxon>Vertebrata</taxon>
        <taxon>Euteleostomi</taxon>
        <taxon>Actinopterygii</taxon>
        <taxon>Neopterygii</taxon>
        <taxon>Teleostei</taxon>
        <taxon>Ostariophysi</taxon>
        <taxon>Siluriformes</taxon>
        <taxon>Callichthyidae</taxon>
        <taxon>Hoplosternum</taxon>
    </lineage>
</organism>
<gene>
    <name type="primary">hbb</name>
</gene>